<comment type="subcellular location">
    <subcellularLocation>
        <location evidence="1">Virion tegument</location>
    </subcellularLocation>
</comment>
<comment type="similarity">
    <text evidence="1">Belongs to the herpesviridae US22 family.</text>
</comment>
<feature type="chain" id="PRO_0000418254" description="Tegument protein US24">
    <location>
        <begin position="1"/>
        <end position="501"/>
    </location>
</feature>
<organism>
    <name type="scientific">Human cytomegalovirus (strain Merlin)</name>
    <name type="common">HHV-5</name>
    <name type="synonym">Human herpesvirus 5</name>
    <dbReference type="NCBI Taxonomy" id="295027"/>
    <lineage>
        <taxon>Viruses</taxon>
        <taxon>Duplodnaviria</taxon>
        <taxon>Heunggongvirae</taxon>
        <taxon>Peploviricota</taxon>
        <taxon>Herviviricetes</taxon>
        <taxon>Herpesvirales</taxon>
        <taxon>Orthoherpesviridae</taxon>
        <taxon>Betaherpesvirinae</taxon>
        <taxon>Cytomegalovirus</taxon>
        <taxon>Cytomegalovirus humanbeta5</taxon>
        <taxon>Human cytomegalovirus</taxon>
    </lineage>
</organism>
<dbReference type="EMBL" id="AY446894">
    <property type="protein sequence ID" value="AAR31713.1"/>
    <property type="molecule type" value="Genomic_DNA"/>
</dbReference>
<dbReference type="RefSeq" id="YP_081609.1">
    <property type="nucleotide sequence ID" value="NC_006273.2"/>
</dbReference>
<dbReference type="GeneID" id="3077578"/>
<dbReference type="KEGG" id="vg:3077578"/>
<dbReference type="Reactome" id="R-HSA-9609690">
    <property type="pathway name" value="HCMV Early Events"/>
</dbReference>
<dbReference type="Proteomes" id="UP000000938">
    <property type="component" value="Segment"/>
</dbReference>
<dbReference type="GO" id="GO:0019033">
    <property type="term" value="C:viral tegument"/>
    <property type="evidence" value="ECO:0007669"/>
    <property type="project" value="UniProtKB-SubCell"/>
</dbReference>
<dbReference type="InterPro" id="IPR003360">
    <property type="entry name" value="US22-like"/>
</dbReference>
<dbReference type="Pfam" id="PF02393">
    <property type="entry name" value="US22"/>
    <property type="match status" value="2"/>
</dbReference>
<name>US24_HCMVM</name>
<sequence length="501" mass="58026">MMDPAAGSGPDGAAVVPPELPALPVAAEDPMALYRQVLRDFKELFFCLEPMEITRYVHRNEGRCLSLGPPKGWHVMLRTEDGIITAAKQAASKLICCREPLTPLGYAVILLPEPRRDHHDGMVATPYVVFMGRFSRVYAYDTREKYMVLVSHNLDELARYGVSRSEIAYRDVIHTTLRRMTVPVPRRYPKGARTMHVLFLNDTTPEGSYATAERILGCDVKLHTPGYGTVIMRLMKTVQQLHRIWPFCALTEVESRRWWWAVRANLATPWYVLGVTGRPRPGRSFVAEVLVLLDWFGAVYAIQMDDPNHYVRRVANTITEFFRMGLLKMVFRHRRFERERQRQTRMEHRHLCPHHHERAVDHKRDILFNEDAALPDERRERERRILQQQYDWLCLTERFDPHEGAWERLDPNTLVLHRYDTNSQSYVLDPDIVGVEAAEREAAGHQDDTGPRLHCLVTTRSSTREGAERVITALVHQSRLVTYSDPFPLKSLTGVREYIQI</sequence>
<organismHost>
    <name type="scientific">Homo sapiens</name>
    <name type="common">Human</name>
    <dbReference type="NCBI Taxonomy" id="9606"/>
</organismHost>
<gene>
    <name type="primary">US24</name>
</gene>
<keyword id="KW-1185">Reference proteome</keyword>
<keyword id="KW-0946">Virion</keyword>
<keyword id="KW-0920">Virion tegument</keyword>
<accession>F5H8S6</accession>
<reference key="1">
    <citation type="journal article" date="2004" name="J. Gen. Virol.">
        <title>Genetic content of wild-type human cytomegalovirus.</title>
        <authorList>
            <person name="Dolan A."/>
            <person name="Cunningham C."/>
            <person name="Hector R.D."/>
            <person name="Hassan-Walker A.F."/>
            <person name="Lee L."/>
            <person name="Addison C."/>
            <person name="Dargan D.J."/>
            <person name="McGeoch D.J."/>
            <person name="Gatherer D."/>
            <person name="Emery V.C."/>
            <person name="Griffiths P.D."/>
            <person name="Sinzger C."/>
            <person name="McSharry B.P."/>
            <person name="Wilkinson G.W.G."/>
            <person name="Davison A.J."/>
        </authorList>
    </citation>
    <scope>NUCLEOTIDE SEQUENCE [LARGE SCALE GENOMIC DNA]</scope>
</reference>
<proteinExistence type="inferred from homology"/>
<evidence type="ECO:0000305" key="1"/>
<protein>
    <recommendedName>
        <fullName>Tegument protein US24</fullName>
    </recommendedName>
</protein>